<name>CJ053_BOVIN</name>
<sequence>MPENAQVIMRYGPYSSIGLPVEHRTYRLEGLLAVLAEDGHQVLLEKIEDWNVVELMVNGEVVFRCNIKDLEFGGDGKLDPLCREARIAVLNAY</sequence>
<protein>
    <recommendedName>
        <fullName>UPF0728 protein C10orf53 homolog</fullName>
    </recommendedName>
</protein>
<organism>
    <name type="scientific">Bos taurus</name>
    <name type="common">Bovine</name>
    <dbReference type="NCBI Taxonomy" id="9913"/>
    <lineage>
        <taxon>Eukaryota</taxon>
        <taxon>Metazoa</taxon>
        <taxon>Chordata</taxon>
        <taxon>Craniata</taxon>
        <taxon>Vertebrata</taxon>
        <taxon>Euteleostomi</taxon>
        <taxon>Mammalia</taxon>
        <taxon>Eutheria</taxon>
        <taxon>Laurasiatheria</taxon>
        <taxon>Artiodactyla</taxon>
        <taxon>Ruminantia</taxon>
        <taxon>Pecora</taxon>
        <taxon>Bovidae</taxon>
        <taxon>Bovinae</taxon>
        <taxon>Bos</taxon>
    </lineage>
</organism>
<accession>P0C920</accession>
<comment type="similarity">
    <text evidence="1">Belongs to the UPF0728 family.</text>
</comment>
<proteinExistence type="inferred from homology"/>
<feature type="chain" id="PRO_0000369437" description="UPF0728 protein C10orf53 homolog">
    <location>
        <begin position="1"/>
        <end position="93"/>
    </location>
</feature>
<keyword id="KW-1185">Reference proteome</keyword>
<reference key="1">
    <citation type="submission" date="2006-12" db="EMBL/GenBank/DDBJ databases">
        <title>Bovine genome sequencing program: full-length cDNA sequencing.</title>
        <authorList>
            <person name="Moore S."/>
            <person name="Alexander L."/>
            <person name="Brownstein M."/>
            <person name="Guan L."/>
            <person name="Lobo S."/>
            <person name="Meng Y."/>
            <person name="Tanaguchi M."/>
            <person name="Wang Z."/>
            <person name="Yu J."/>
            <person name="Prange C."/>
            <person name="Schreiber K."/>
            <person name="Shenmen C."/>
            <person name="Wagner L."/>
            <person name="Bala M."/>
            <person name="Barbazuk S."/>
            <person name="Barber S."/>
            <person name="Babakaiff R."/>
            <person name="Beland J."/>
            <person name="Chun E."/>
            <person name="Del Rio L."/>
            <person name="Gibson S."/>
            <person name="Hanson R."/>
            <person name="Kirkpatrick R."/>
            <person name="Liu J."/>
            <person name="Matsuo C."/>
            <person name="Mayo M."/>
            <person name="Santos R.R."/>
            <person name="Stott J."/>
            <person name="Tsai M."/>
            <person name="Wong D."/>
            <person name="Siddiqui A."/>
            <person name="Holt R."/>
            <person name="Jones S.J."/>
            <person name="Marra M.A."/>
        </authorList>
    </citation>
    <scope>NUCLEOTIDE SEQUENCE [LARGE SCALE MRNA] OF 2-93</scope>
    <source>
        <tissue>Liver</tissue>
    </source>
</reference>
<dbReference type="EMBL" id="EH124702">
    <property type="status" value="NOT_ANNOTATED_CDS"/>
    <property type="molecule type" value="mRNA"/>
</dbReference>
<dbReference type="RefSeq" id="NP_001161475.1">
    <property type="nucleotide sequence ID" value="NM_001168003.1"/>
</dbReference>
<dbReference type="PaxDb" id="9913-ENSBTAP00000054548"/>
<dbReference type="Ensembl" id="ENSBTAT00000063554.2">
    <property type="protein sequence ID" value="ENSBTAP00000054548.1"/>
    <property type="gene ID" value="ENSBTAG00000045949.3"/>
</dbReference>
<dbReference type="GeneID" id="785781"/>
<dbReference type="KEGG" id="bta:785781"/>
<dbReference type="CTD" id="607129"/>
<dbReference type="VEuPathDB" id="HostDB:ENSBTAG00000045949"/>
<dbReference type="VGNC" id="VGNC:52695">
    <property type="gene designation" value="C28H10orf53"/>
</dbReference>
<dbReference type="eggNOG" id="ENOG502S4W1">
    <property type="taxonomic scope" value="Eukaryota"/>
</dbReference>
<dbReference type="GeneTree" id="ENSGT00390000002871"/>
<dbReference type="HOGENOM" id="CLU_189555_0_0_1"/>
<dbReference type="InParanoid" id="P0C920"/>
<dbReference type="OMA" id="VEHRTYR"/>
<dbReference type="OrthoDB" id="10003460at2759"/>
<dbReference type="TreeFam" id="TF329673"/>
<dbReference type="Proteomes" id="UP000009136">
    <property type="component" value="Chromosome 28"/>
</dbReference>
<dbReference type="Bgee" id="ENSBTAG00000045949">
    <property type="expression patterns" value="Expressed in semen and 10 other cell types or tissues"/>
</dbReference>
<dbReference type="InterPro" id="IPR027885">
    <property type="entry name" value="UPF0728"/>
</dbReference>
<dbReference type="PANTHER" id="PTHR28448">
    <property type="entry name" value="UPF0728 PROTEIN C10ORF53"/>
    <property type="match status" value="1"/>
</dbReference>
<dbReference type="PANTHER" id="PTHR28448:SF1">
    <property type="entry name" value="UPF0728 PROTEIN C10ORF53"/>
    <property type="match status" value="1"/>
</dbReference>
<dbReference type="Pfam" id="PF15092">
    <property type="entry name" value="UPF0728"/>
    <property type="match status" value="1"/>
</dbReference>
<evidence type="ECO:0000305" key="1"/>